<keyword id="KW-0227">DNA damage</keyword>
<keyword id="KW-0233">DNA recombination</keyword>
<keyword id="KW-0234">DNA repair</keyword>
<keyword id="KW-0479">Metal-binding</keyword>
<keyword id="KW-0862">Zinc</keyword>
<keyword id="KW-0863">Zinc-finger</keyword>
<reference key="1">
    <citation type="journal article" date="2000" name="Nucleic Acids Res.">
        <title>Genome sequences of Chlamydia trachomatis MoPn and Chlamydia pneumoniae AR39.</title>
        <authorList>
            <person name="Read T.D."/>
            <person name="Brunham R.C."/>
            <person name="Shen C."/>
            <person name="Gill S.R."/>
            <person name="Heidelberg J.F."/>
            <person name="White O."/>
            <person name="Hickey E.K."/>
            <person name="Peterson J.D."/>
            <person name="Utterback T.R."/>
            <person name="Berry K.J."/>
            <person name="Bass S."/>
            <person name="Linher K.D."/>
            <person name="Weidman J.F."/>
            <person name="Khouri H.M."/>
            <person name="Craven B."/>
            <person name="Bowman C."/>
            <person name="Dodson R.J."/>
            <person name="Gwinn M.L."/>
            <person name="Nelson W.C."/>
            <person name="DeBoy R.T."/>
            <person name="Kolonay J.F."/>
            <person name="McClarty G."/>
            <person name="Salzberg S.L."/>
            <person name="Eisen J.A."/>
            <person name="Fraser C.M."/>
        </authorList>
    </citation>
    <scope>NUCLEOTIDE SEQUENCE [LARGE SCALE GENOMIC DNA]</scope>
    <source>
        <strain>MoPn / Nigg</strain>
    </source>
</reference>
<proteinExistence type="inferred from homology"/>
<dbReference type="EMBL" id="AE002160">
    <property type="protein sequence ID" value="AAF39353.1"/>
    <property type="status" value="ALT_INIT"/>
    <property type="molecule type" value="Genomic_DNA"/>
</dbReference>
<dbReference type="PIR" id="H81695">
    <property type="entry name" value="H81695"/>
</dbReference>
<dbReference type="RefSeq" id="WP_010230647.1">
    <property type="nucleotide sequence ID" value="NZ_CP063055.1"/>
</dbReference>
<dbReference type="SMR" id="Q9PKF4"/>
<dbReference type="GeneID" id="1245871"/>
<dbReference type="KEGG" id="cmu:TC_0511"/>
<dbReference type="eggNOG" id="COG0353">
    <property type="taxonomic scope" value="Bacteria"/>
</dbReference>
<dbReference type="HOGENOM" id="CLU_060739_1_1_0"/>
<dbReference type="OrthoDB" id="9802672at2"/>
<dbReference type="Proteomes" id="UP000000800">
    <property type="component" value="Chromosome"/>
</dbReference>
<dbReference type="GO" id="GO:0003677">
    <property type="term" value="F:DNA binding"/>
    <property type="evidence" value="ECO:0007669"/>
    <property type="project" value="UniProtKB-UniRule"/>
</dbReference>
<dbReference type="GO" id="GO:0008270">
    <property type="term" value="F:zinc ion binding"/>
    <property type="evidence" value="ECO:0007669"/>
    <property type="project" value="UniProtKB-KW"/>
</dbReference>
<dbReference type="GO" id="GO:0006310">
    <property type="term" value="P:DNA recombination"/>
    <property type="evidence" value="ECO:0007669"/>
    <property type="project" value="UniProtKB-UniRule"/>
</dbReference>
<dbReference type="GO" id="GO:0006281">
    <property type="term" value="P:DNA repair"/>
    <property type="evidence" value="ECO:0007669"/>
    <property type="project" value="UniProtKB-UniRule"/>
</dbReference>
<dbReference type="CDD" id="cd01025">
    <property type="entry name" value="TOPRIM_recR"/>
    <property type="match status" value="1"/>
</dbReference>
<dbReference type="Gene3D" id="3.40.1360.10">
    <property type="match status" value="1"/>
</dbReference>
<dbReference type="Gene3D" id="1.10.8.420">
    <property type="entry name" value="RecR Domain 1"/>
    <property type="match status" value="1"/>
</dbReference>
<dbReference type="HAMAP" id="MF_00017">
    <property type="entry name" value="RecR"/>
    <property type="match status" value="1"/>
</dbReference>
<dbReference type="InterPro" id="IPR000093">
    <property type="entry name" value="DNA_Rcmb_RecR"/>
</dbReference>
<dbReference type="InterPro" id="IPR023627">
    <property type="entry name" value="Rcmb_RecR"/>
</dbReference>
<dbReference type="InterPro" id="IPR015967">
    <property type="entry name" value="Rcmb_RecR_Znf"/>
</dbReference>
<dbReference type="InterPro" id="IPR006171">
    <property type="entry name" value="TOPRIM_dom"/>
</dbReference>
<dbReference type="InterPro" id="IPR034137">
    <property type="entry name" value="TOPRIM_RecR"/>
</dbReference>
<dbReference type="NCBIfam" id="TIGR00615">
    <property type="entry name" value="recR"/>
    <property type="match status" value="1"/>
</dbReference>
<dbReference type="PANTHER" id="PTHR30446">
    <property type="entry name" value="RECOMBINATION PROTEIN RECR"/>
    <property type="match status" value="1"/>
</dbReference>
<dbReference type="PANTHER" id="PTHR30446:SF0">
    <property type="entry name" value="RECOMBINATION PROTEIN RECR"/>
    <property type="match status" value="1"/>
</dbReference>
<dbReference type="Pfam" id="PF21175">
    <property type="entry name" value="RecR_C"/>
    <property type="match status" value="1"/>
</dbReference>
<dbReference type="Pfam" id="PF21176">
    <property type="entry name" value="RecR_HhH"/>
    <property type="match status" value="1"/>
</dbReference>
<dbReference type="Pfam" id="PF13662">
    <property type="entry name" value="Toprim_4"/>
    <property type="match status" value="1"/>
</dbReference>
<dbReference type="SMART" id="SM00493">
    <property type="entry name" value="TOPRIM"/>
    <property type="match status" value="1"/>
</dbReference>
<dbReference type="SUPFAM" id="SSF111304">
    <property type="entry name" value="Recombination protein RecR"/>
    <property type="match status" value="1"/>
</dbReference>
<dbReference type="PROSITE" id="PS01300">
    <property type="entry name" value="RECR"/>
    <property type="match status" value="1"/>
</dbReference>
<dbReference type="PROSITE" id="PS50880">
    <property type="entry name" value="TOPRIM"/>
    <property type="match status" value="1"/>
</dbReference>
<evidence type="ECO:0000255" key="1">
    <source>
        <dbReference type="HAMAP-Rule" id="MF_00017"/>
    </source>
</evidence>
<evidence type="ECO:0000305" key="2"/>
<accession>Q9PKF4</accession>
<feature type="chain" id="PRO_0000190303" description="Recombination protein RecR">
    <location>
        <begin position="1"/>
        <end position="200"/>
    </location>
</feature>
<feature type="domain" description="Toprim" evidence="1">
    <location>
        <begin position="82"/>
        <end position="177"/>
    </location>
</feature>
<feature type="zinc finger region" description="C4-type" evidence="1">
    <location>
        <begin position="58"/>
        <end position="75"/>
    </location>
</feature>
<sequence>MLKYPDYISKLISFLKKLPGIGFKSAEKIAFELLEWDPSQVEAMGLAMQEFSASHATCPDCFCLKTSKTSSCDFCSESRDSSFLCIVATPKDVFSFEKSKIFKGRYFVLGNLLSPITGKHLSLEKLNILKQRIEDFAPKEMIIALDATLEGDATALFLKQEFSHLPIKISRLALGMPVGLSFDFIDSNTLARAFSGRNCF</sequence>
<gene>
    <name evidence="1" type="primary">recR</name>
    <name type="ordered locus">TC_0511</name>
</gene>
<protein>
    <recommendedName>
        <fullName evidence="1">Recombination protein RecR</fullName>
    </recommendedName>
</protein>
<comment type="function">
    <text evidence="1">May play a role in DNA repair. It seems to be involved in an RecBC-independent recombinational process of DNA repair. It may act with RecF and RecO.</text>
</comment>
<comment type="similarity">
    <text evidence="1">Belongs to the RecR family.</text>
</comment>
<comment type="sequence caution" evidence="2">
    <conflict type="erroneous initiation">
        <sequence resource="EMBL-CDS" id="AAF39353"/>
    </conflict>
</comment>
<name>RECR_CHLMU</name>
<organism>
    <name type="scientific">Chlamydia muridarum (strain MoPn / Nigg)</name>
    <dbReference type="NCBI Taxonomy" id="243161"/>
    <lineage>
        <taxon>Bacteria</taxon>
        <taxon>Pseudomonadati</taxon>
        <taxon>Chlamydiota</taxon>
        <taxon>Chlamydiia</taxon>
        <taxon>Chlamydiales</taxon>
        <taxon>Chlamydiaceae</taxon>
        <taxon>Chlamydia/Chlamydophila group</taxon>
        <taxon>Chlamydia</taxon>
    </lineage>
</organism>